<accession>Q2SJQ5</accession>
<gene>
    <name evidence="1" type="primary">htpX</name>
    <name type="ordered locus">HCH_02296</name>
</gene>
<keyword id="KW-0997">Cell inner membrane</keyword>
<keyword id="KW-1003">Cell membrane</keyword>
<keyword id="KW-0378">Hydrolase</keyword>
<keyword id="KW-0472">Membrane</keyword>
<keyword id="KW-0479">Metal-binding</keyword>
<keyword id="KW-0482">Metalloprotease</keyword>
<keyword id="KW-0645">Protease</keyword>
<keyword id="KW-1185">Reference proteome</keyword>
<keyword id="KW-0812">Transmembrane</keyword>
<keyword id="KW-1133">Transmembrane helix</keyword>
<keyword id="KW-0862">Zinc</keyword>
<proteinExistence type="inferred from homology"/>
<organism>
    <name type="scientific">Hahella chejuensis (strain KCTC 2396)</name>
    <dbReference type="NCBI Taxonomy" id="349521"/>
    <lineage>
        <taxon>Bacteria</taxon>
        <taxon>Pseudomonadati</taxon>
        <taxon>Pseudomonadota</taxon>
        <taxon>Gammaproteobacteria</taxon>
        <taxon>Oceanospirillales</taxon>
        <taxon>Hahellaceae</taxon>
        <taxon>Hahella</taxon>
    </lineage>
</organism>
<sequence>MFRILLFLATNIAVVLVASVTLRLLGVEPYLQGSGLNLTSLLIFCAVFGMSGAMISLFLSKWIAKMSTRTQVIEQPRDAVESWLLDTVRELSSEAGIKMPEVGIFPAHQSNAFATGWNKNDALVAVSEGLLRRFSKDEIRAVLAHEIGHVANGDMVTLALIQGVINTFVMFFARIIGNIVDKAVFKNENGHGIGFFITTIFAEIVLGILASIIVMWFSRKREFRADAMGAKLAGSGAMIAALQRLKAETQMPNEMPDTLTAFGITEGVKQGFKALFSSHPPLDERIAALAANR</sequence>
<protein>
    <recommendedName>
        <fullName evidence="1">Protease HtpX</fullName>
        <ecNumber evidence="1">3.4.24.-</ecNumber>
    </recommendedName>
    <alternativeName>
        <fullName evidence="1">Heat shock protein HtpX</fullName>
    </alternativeName>
</protein>
<evidence type="ECO:0000255" key="1">
    <source>
        <dbReference type="HAMAP-Rule" id="MF_00188"/>
    </source>
</evidence>
<reference key="1">
    <citation type="journal article" date="2005" name="Nucleic Acids Res.">
        <title>Genomic blueprint of Hahella chejuensis, a marine microbe producing an algicidal agent.</title>
        <authorList>
            <person name="Jeong H."/>
            <person name="Yim J.H."/>
            <person name="Lee C."/>
            <person name="Choi S.-H."/>
            <person name="Park Y.K."/>
            <person name="Yoon S.H."/>
            <person name="Hur C.-G."/>
            <person name="Kang H.-Y."/>
            <person name="Kim D."/>
            <person name="Lee H.H."/>
            <person name="Park K.H."/>
            <person name="Park S.-H."/>
            <person name="Park H.-S."/>
            <person name="Lee H.K."/>
            <person name="Oh T.K."/>
            <person name="Kim J.F."/>
        </authorList>
    </citation>
    <scope>NUCLEOTIDE SEQUENCE [LARGE SCALE GENOMIC DNA]</scope>
    <source>
        <strain>KCTC 2396</strain>
    </source>
</reference>
<feature type="chain" id="PRO_1000020870" description="Protease HtpX">
    <location>
        <begin position="1"/>
        <end position="293"/>
    </location>
</feature>
<feature type="transmembrane region" description="Helical" evidence="1">
    <location>
        <begin position="2"/>
        <end position="22"/>
    </location>
</feature>
<feature type="transmembrane region" description="Helical" evidence="1">
    <location>
        <begin position="38"/>
        <end position="58"/>
    </location>
</feature>
<feature type="transmembrane region" description="Helical" evidence="1">
    <location>
        <begin position="156"/>
        <end position="176"/>
    </location>
</feature>
<feature type="transmembrane region" description="Helical" evidence="1">
    <location>
        <begin position="193"/>
        <end position="213"/>
    </location>
</feature>
<feature type="active site" evidence="1">
    <location>
        <position position="146"/>
    </location>
</feature>
<feature type="binding site" evidence="1">
    <location>
        <position position="145"/>
    </location>
    <ligand>
        <name>Zn(2+)</name>
        <dbReference type="ChEBI" id="CHEBI:29105"/>
        <note>catalytic</note>
    </ligand>
</feature>
<feature type="binding site" evidence="1">
    <location>
        <position position="149"/>
    </location>
    <ligand>
        <name>Zn(2+)</name>
        <dbReference type="ChEBI" id="CHEBI:29105"/>
        <note>catalytic</note>
    </ligand>
</feature>
<feature type="binding site" evidence="1">
    <location>
        <position position="222"/>
    </location>
    <ligand>
        <name>Zn(2+)</name>
        <dbReference type="ChEBI" id="CHEBI:29105"/>
        <note>catalytic</note>
    </ligand>
</feature>
<comment type="cofactor">
    <cofactor evidence="1">
        <name>Zn(2+)</name>
        <dbReference type="ChEBI" id="CHEBI:29105"/>
    </cofactor>
    <text evidence="1">Binds 1 zinc ion per subunit.</text>
</comment>
<comment type="subcellular location">
    <subcellularLocation>
        <location evidence="1">Cell inner membrane</location>
        <topology evidence="1">Multi-pass membrane protein</topology>
    </subcellularLocation>
</comment>
<comment type="similarity">
    <text evidence="1">Belongs to the peptidase M48B family.</text>
</comment>
<name>HTPX_HAHCH</name>
<dbReference type="EC" id="3.4.24.-" evidence="1"/>
<dbReference type="EMBL" id="CP000155">
    <property type="protein sequence ID" value="ABC29119.1"/>
    <property type="molecule type" value="Genomic_DNA"/>
</dbReference>
<dbReference type="RefSeq" id="WP_011396188.1">
    <property type="nucleotide sequence ID" value="NC_007645.1"/>
</dbReference>
<dbReference type="SMR" id="Q2SJQ5"/>
<dbReference type="STRING" id="349521.HCH_02296"/>
<dbReference type="MEROPS" id="M48.002"/>
<dbReference type="KEGG" id="hch:HCH_02296"/>
<dbReference type="eggNOG" id="COG0501">
    <property type="taxonomic scope" value="Bacteria"/>
</dbReference>
<dbReference type="HOGENOM" id="CLU_042266_1_0_6"/>
<dbReference type="OrthoDB" id="15218at2"/>
<dbReference type="Proteomes" id="UP000000238">
    <property type="component" value="Chromosome"/>
</dbReference>
<dbReference type="GO" id="GO:0005886">
    <property type="term" value="C:plasma membrane"/>
    <property type="evidence" value="ECO:0007669"/>
    <property type="project" value="UniProtKB-SubCell"/>
</dbReference>
<dbReference type="GO" id="GO:0004222">
    <property type="term" value="F:metalloendopeptidase activity"/>
    <property type="evidence" value="ECO:0007669"/>
    <property type="project" value="UniProtKB-UniRule"/>
</dbReference>
<dbReference type="GO" id="GO:0008270">
    <property type="term" value="F:zinc ion binding"/>
    <property type="evidence" value="ECO:0007669"/>
    <property type="project" value="UniProtKB-UniRule"/>
</dbReference>
<dbReference type="GO" id="GO:0006508">
    <property type="term" value="P:proteolysis"/>
    <property type="evidence" value="ECO:0007669"/>
    <property type="project" value="UniProtKB-KW"/>
</dbReference>
<dbReference type="CDD" id="cd07335">
    <property type="entry name" value="M48B_HtpX_like"/>
    <property type="match status" value="1"/>
</dbReference>
<dbReference type="Gene3D" id="3.30.2010.10">
    <property type="entry name" value="Metalloproteases ('zincins'), catalytic domain"/>
    <property type="match status" value="1"/>
</dbReference>
<dbReference type="HAMAP" id="MF_00188">
    <property type="entry name" value="Pept_M48_protease_HtpX"/>
    <property type="match status" value="1"/>
</dbReference>
<dbReference type="InterPro" id="IPR050083">
    <property type="entry name" value="HtpX_protease"/>
</dbReference>
<dbReference type="InterPro" id="IPR022919">
    <property type="entry name" value="Pept_M48_protease_HtpX"/>
</dbReference>
<dbReference type="InterPro" id="IPR001915">
    <property type="entry name" value="Peptidase_M48"/>
</dbReference>
<dbReference type="NCBIfam" id="NF003965">
    <property type="entry name" value="PRK05457.1"/>
    <property type="match status" value="1"/>
</dbReference>
<dbReference type="PANTHER" id="PTHR43221">
    <property type="entry name" value="PROTEASE HTPX"/>
    <property type="match status" value="1"/>
</dbReference>
<dbReference type="PANTHER" id="PTHR43221:SF1">
    <property type="entry name" value="PROTEASE HTPX"/>
    <property type="match status" value="1"/>
</dbReference>
<dbReference type="Pfam" id="PF01435">
    <property type="entry name" value="Peptidase_M48"/>
    <property type="match status" value="1"/>
</dbReference>